<organism>
    <name type="scientific">Xylella fastidiosa (strain Temecula1 / ATCC 700964)</name>
    <dbReference type="NCBI Taxonomy" id="183190"/>
    <lineage>
        <taxon>Bacteria</taxon>
        <taxon>Pseudomonadati</taxon>
        <taxon>Pseudomonadota</taxon>
        <taxon>Gammaproteobacteria</taxon>
        <taxon>Lysobacterales</taxon>
        <taxon>Lysobacteraceae</taxon>
        <taxon>Xylella</taxon>
    </lineage>
</organism>
<gene>
    <name evidence="1" type="primary">thrS</name>
    <name type="ordered locus">PD_1916</name>
</gene>
<proteinExistence type="inferred from homology"/>
<comment type="function">
    <text evidence="1">Catalyzes the attachment of threonine to tRNA(Thr) in a two-step reaction: L-threonine is first activated by ATP to form Thr-AMP and then transferred to the acceptor end of tRNA(Thr). Also edits incorrectly charged L-seryl-tRNA(Thr).</text>
</comment>
<comment type="catalytic activity">
    <reaction evidence="1">
        <text>tRNA(Thr) + L-threonine + ATP = L-threonyl-tRNA(Thr) + AMP + diphosphate + H(+)</text>
        <dbReference type="Rhea" id="RHEA:24624"/>
        <dbReference type="Rhea" id="RHEA-COMP:9670"/>
        <dbReference type="Rhea" id="RHEA-COMP:9704"/>
        <dbReference type="ChEBI" id="CHEBI:15378"/>
        <dbReference type="ChEBI" id="CHEBI:30616"/>
        <dbReference type="ChEBI" id="CHEBI:33019"/>
        <dbReference type="ChEBI" id="CHEBI:57926"/>
        <dbReference type="ChEBI" id="CHEBI:78442"/>
        <dbReference type="ChEBI" id="CHEBI:78534"/>
        <dbReference type="ChEBI" id="CHEBI:456215"/>
        <dbReference type="EC" id="6.1.1.3"/>
    </reaction>
</comment>
<comment type="cofactor">
    <cofactor evidence="1">
        <name>Zn(2+)</name>
        <dbReference type="ChEBI" id="CHEBI:29105"/>
    </cofactor>
    <text evidence="1">Binds 1 zinc ion per subunit.</text>
</comment>
<comment type="subunit">
    <text evidence="1">Homodimer.</text>
</comment>
<comment type="subcellular location">
    <subcellularLocation>
        <location evidence="1">Cytoplasm</location>
    </subcellularLocation>
</comment>
<comment type="similarity">
    <text evidence="1">Belongs to the class-II aminoacyl-tRNA synthetase family.</text>
</comment>
<protein>
    <recommendedName>
        <fullName evidence="1">Threonine--tRNA ligase</fullName>
        <ecNumber evidence="1">6.1.1.3</ecNumber>
    </recommendedName>
    <alternativeName>
        <fullName evidence="1">Threonyl-tRNA synthetase</fullName>
        <shortName evidence="1">ThrRS</shortName>
    </alternativeName>
</protein>
<keyword id="KW-0030">Aminoacyl-tRNA synthetase</keyword>
<keyword id="KW-0067">ATP-binding</keyword>
<keyword id="KW-0963">Cytoplasm</keyword>
<keyword id="KW-0436">Ligase</keyword>
<keyword id="KW-0479">Metal-binding</keyword>
<keyword id="KW-0547">Nucleotide-binding</keyword>
<keyword id="KW-0648">Protein biosynthesis</keyword>
<keyword id="KW-1185">Reference proteome</keyword>
<keyword id="KW-0694">RNA-binding</keyword>
<keyword id="KW-0820">tRNA-binding</keyword>
<keyword id="KW-0862">Zinc</keyword>
<name>SYT_XYLFT</name>
<reference key="1">
    <citation type="journal article" date="2003" name="J. Bacteriol.">
        <title>Comparative analyses of the complete genome sequences of Pierce's disease and citrus variegated chlorosis strains of Xylella fastidiosa.</title>
        <authorList>
            <person name="Van Sluys M.A."/>
            <person name="de Oliveira M.C."/>
            <person name="Monteiro-Vitorello C.B."/>
            <person name="Miyaki C.Y."/>
            <person name="Furlan L.R."/>
            <person name="Camargo L.E.A."/>
            <person name="da Silva A.C.R."/>
            <person name="Moon D.H."/>
            <person name="Takita M.A."/>
            <person name="Lemos E.G.M."/>
            <person name="Machado M.A."/>
            <person name="Ferro M.I.T."/>
            <person name="da Silva F.R."/>
            <person name="Goldman M.H.S."/>
            <person name="Goldman G.H."/>
            <person name="Lemos M.V.F."/>
            <person name="El-Dorry H."/>
            <person name="Tsai S.M."/>
            <person name="Carrer H."/>
            <person name="Carraro D.M."/>
            <person name="de Oliveira R.C."/>
            <person name="Nunes L.R."/>
            <person name="Siqueira W.J."/>
            <person name="Coutinho L.L."/>
            <person name="Kimura E.T."/>
            <person name="Ferro E.S."/>
            <person name="Harakava R."/>
            <person name="Kuramae E.E."/>
            <person name="Marino C.L."/>
            <person name="Giglioti E."/>
            <person name="Abreu I.L."/>
            <person name="Alves L.M.C."/>
            <person name="do Amaral A.M."/>
            <person name="Baia G.S."/>
            <person name="Blanco S.R."/>
            <person name="Brito M.S."/>
            <person name="Cannavan F.S."/>
            <person name="Celestino A.V."/>
            <person name="da Cunha A.F."/>
            <person name="Fenille R.C."/>
            <person name="Ferro J.A."/>
            <person name="Formighieri E.F."/>
            <person name="Kishi L.T."/>
            <person name="Leoni S.G."/>
            <person name="Oliveira A.R."/>
            <person name="Rosa V.E. Jr."/>
            <person name="Sassaki F.T."/>
            <person name="Sena J.A.D."/>
            <person name="de Souza A.A."/>
            <person name="Truffi D."/>
            <person name="Tsukumo F."/>
            <person name="Yanai G.M."/>
            <person name="Zaros L.G."/>
            <person name="Civerolo E.L."/>
            <person name="Simpson A.J.G."/>
            <person name="Almeida N.F. Jr."/>
            <person name="Setubal J.C."/>
            <person name="Kitajima J.P."/>
        </authorList>
    </citation>
    <scope>NUCLEOTIDE SEQUENCE [LARGE SCALE GENOMIC DNA]</scope>
    <source>
        <strain>Temecula1 / ATCC 700964</strain>
    </source>
</reference>
<evidence type="ECO:0000255" key="1">
    <source>
        <dbReference type="HAMAP-Rule" id="MF_00184"/>
    </source>
</evidence>
<evidence type="ECO:0000255" key="2">
    <source>
        <dbReference type="PROSITE-ProRule" id="PRU01228"/>
    </source>
</evidence>
<sequence length="635" mass="72813">MITITLPDGSRREFEGPVSVMQVAHAIGPGLAKATIAGQIDGGHLVDASDLIEHDAILRIITPEDQEALEIIRHSCAHLVGHAVKQLYPEAKMVIGPVIADGFYYDIYSKRPFTPEDLAAIEQRMVELIAQDYDVVKHITARHDVVRLFKERGEDYKLRLIEDMGPEVTAMGIYHHQEYVDMCRGPHVPNTRFLKAFRLTRISGAYWRGNTKNEQLQRIYGTAWADKKQLEAYMQRLQDAEKRDHRKIGKAQDLFHLQEEGPGLVFWHPKGWVIWQTIENYIRRVYRNSGYGELRCPQILDVSLWQKSGHWDNYKENMFFTDSEKRTYAVKPMNCPGHVQVFNQGLHSYRDLPIRYGEFGACHRNEPSGALHGLLRVRGFTQDDGHIFCTEAQIEAEVTAFHRQALQVYADFGFENIQIKIALRPDKRLGDSLSWDKAEAALRAALSACEVEWQELPGEGAFYGPKIEYHLKDAIGRTWQLGTIQVDFMMPARLGAEYVDERSQRRHPVMLHRAIVGSMERFIGILIEHYAGIWPTWLAPVQVVIANITDAQYEYAEQVHKALLNQGFRVNIDLRNEKIGYKIREHTLQRVPYLLVVGDREKENGTVAVRTCSREDLGAMSISTFVERLQTEQVV</sequence>
<accession>Q87AB2</accession>
<feature type="chain" id="PRO_0000101093" description="Threonine--tRNA ligase">
    <location>
        <begin position="1"/>
        <end position="635"/>
    </location>
</feature>
<feature type="domain" description="TGS" evidence="2">
    <location>
        <begin position="1"/>
        <end position="62"/>
    </location>
</feature>
<feature type="region of interest" description="Catalytic" evidence="1">
    <location>
        <begin position="244"/>
        <end position="535"/>
    </location>
</feature>
<feature type="binding site" evidence="1">
    <location>
        <position position="335"/>
    </location>
    <ligand>
        <name>Zn(2+)</name>
        <dbReference type="ChEBI" id="CHEBI:29105"/>
    </ligand>
</feature>
<feature type="binding site" evidence="1">
    <location>
        <position position="386"/>
    </location>
    <ligand>
        <name>Zn(2+)</name>
        <dbReference type="ChEBI" id="CHEBI:29105"/>
    </ligand>
</feature>
<feature type="binding site" evidence="1">
    <location>
        <position position="512"/>
    </location>
    <ligand>
        <name>Zn(2+)</name>
        <dbReference type="ChEBI" id="CHEBI:29105"/>
    </ligand>
</feature>
<dbReference type="EC" id="6.1.1.3" evidence="1"/>
<dbReference type="EMBL" id="AE009442">
    <property type="protein sequence ID" value="AAO29746.1"/>
    <property type="molecule type" value="Genomic_DNA"/>
</dbReference>
<dbReference type="RefSeq" id="WP_004090399.1">
    <property type="nucleotide sequence ID" value="NC_004556.1"/>
</dbReference>
<dbReference type="SMR" id="Q87AB2"/>
<dbReference type="GeneID" id="93905776"/>
<dbReference type="KEGG" id="xft:PD_1916"/>
<dbReference type="HOGENOM" id="CLU_008554_0_1_6"/>
<dbReference type="Proteomes" id="UP000002516">
    <property type="component" value="Chromosome"/>
</dbReference>
<dbReference type="GO" id="GO:0005829">
    <property type="term" value="C:cytosol"/>
    <property type="evidence" value="ECO:0007669"/>
    <property type="project" value="TreeGrafter"/>
</dbReference>
<dbReference type="GO" id="GO:0005524">
    <property type="term" value="F:ATP binding"/>
    <property type="evidence" value="ECO:0007669"/>
    <property type="project" value="UniProtKB-UniRule"/>
</dbReference>
<dbReference type="GO" id="GO:0046872">
    <property type="term" value="F:metal ion binding"/>
    <property type="evidence" value="ECO:0007669"/>
    <property type="project" value="UniProtKB-KW"/>
</dbReference>
<dbReference type="GO" id="GO:0004829">
    <property type="term" value="F:threonine-tRNA ligase activity"/>
    <property type="evidence" value="ECO:0007669"/>
    <property type="project" value="UniProtKB-UniRule"/>
</dbReference>
<dbReference type="GO" id="GO:0000049">
    <property type="term" value="F:tRNA binding"/>
    <property type="evidence" value="ECO:0007669"/>
    <property type="project" value="UniProtKB-KW"/>
</dbReference>
<dbReference type="GO" id="GO:0006435">
    <property type="term" value="P:threonyl-tRNA aminoacylation"/>
    <property type="evidence" value="ECO:0007669"/>
    <property type="project" value="UniProtKB-UniRule"/>
</dbReference>
<dbReference type="CDD" id="cd01667">
    <property type="entry name" value="TGS_ThrRS"/>
    <property type="match status" value="1"/>
</dbReference>
<dbReference type="CDD" id="cd00860">
    <property type="entry name" value="ThrRS_anticodon"/>
    <property type="match status" value="1"/>
</dbReference>
<dbReference type="CDD" id="cd00771">
    <property type="entry name" value="ThrRS_core"/>
    <property type="match status" value="1"/>
</dbReference>
<dbReference type="FunFam" id="3.10.20.30:FF:000005">
    <property type="entry name" value="Threonine--tRNA ligase"/>
    <property type="match status" value="1"/>
</dbReference>
<dbReference type="FunFam" id="3.30.54.20:FF:000002">
    <property type="entry name" value="Threonine--tRNA ligase"/>
    <property type="match status" value="1"/>
</dbReference>
<dbReference type="FunFam" id="3.30.930.10:FF:000002">
    <property type="entry name" value="Threonine--tRNA ligase"/>
    <property type="match status" value="1"/>
</dbReference>
<dbReference type="FunFam" id="3.40.50.800:FF:000001">
    <property type="entry name" value="Threonine--tRNA ligase"/>
    <property type="match status" value="1"/>
</dbReference>
<dbReference type="FunFam" id="3.30.980.10:FF:000005">
    <property type="entry name" value="Threonyl-tRNA synthetase, mitochondrial"/>
    <property type="match status" value="1"/>
</dbReference>
<dbReference type="Gene3D" id="3.10.20.30">
    <property type="match status" value="1"/>
</dbReference>
<dbReference type="Gene3D" id="3.30.54.20">
    <property type="match status" value="1"/>
</dbReference>
<dbReference type="Gene3D" id="3.40.50.800">
    <property type="entry name" value="Anticodon-binding domain"/>
    <property type="match status" value="1"/>
</dbReference>
<dbReference type="Gene3D" id="3.30.930.10">
    <property type="entry name" value="Bira Bifunctional Protein, Domain 2"/>
    <property type="match status" value="1"/>
</dbReference>
<dbReference type="Gene3D" id="3.30.980.10">
    <property type="entry name" value="Threonyl-trna Synthetase, Chain A, domain 2"/>
    <property type="match status" value="1"/>
</dbReference>
<dbReference type="HAMAP" id="MF_00184">
    <property type="entry name" value="Thr_tRNA_synth"/>
    <property type="match status" value="1"/>
</dbReference>
<dbReference type="InterPro" id="IPR002314">
    <property type="entry name" value="aa-tRNA-synt_IIb"/>
</dbReference>
<dbReference type="InterPro" id="IPR006195">
    <property type="entry name" value="aa-tRNA-synth_II"/>
</dbReference>
<dbReference type="InterPro" id="IPR045864">
    <property type="entry name" value="aa-tRNA-synth_II/BPL/LPL"/>
</dbReference>
<dbReference type="InterPro" id="IPR004154">
    <property type="entry name" value="Anticodon-bd"/>
</dbReference>
<dbReference type="InterPro" id="IPR036621">
    <property type="entry name" value="Anticodon-bd_dom_sf"/>
</dbReference>
<dbReference type="InterPro" id="IPR012675">
    <property type="entry name" value="Beta-grasp_dom_sf"/>
</dbReference>
<dbReference type="InterPro" id="IPR004095">
    <property type="entry name" value="TGS"/>
</dbReference>
<dbReference type="InterPro" id="IPR012676">
    <property type="entry name" value="TGS-like"/>
</dbReference>
<dbReference type="InterPro" id="IPR002320">
    <property type="entry name" value="Thr-tRNA-ligase_IIa"/>
</dbReference>
<dbReference type="InterPro" id="IPR018163">
    <property type="entry name" value="Thr/Ala-tRNA-synth_IIc_edit"/>
</dbReference>
<dbReference type="InterPro" id="IPR047246">
    <property type="entry name" value="ThrRS_anticodon"/>
</dbReference>
<dbReference type="InterPro" id="IPR033728">
    <property type="entry name" value="ThrRS_core"/>
</dbReference>
<dbReference type="InterPro" id="IPR012947">
    <property type="entry name" value="tRNA_SAD"/>
</dbReference>
<dbReference type="NCBIfam" id="TIGR00418">
    <property type="entry name" value="thrS"/>
    <property type="match status" value="1"/>
</dbReference>
<dbReference type="PANTHER" id="PTHR11451:SF44">
    <property type="entry name" value="THREONINE--TRNA LIGASE, CHLOROPLASTIC_MITOCHONDRIAL 2"/>
    <property type="match status" value="1"/>
</dbReference>
<dbReference type="PANTHER" id="PTHR11451">
    <property type="entry name" value="THREONINE-TRNA LIGASE"/>
    <property type="match status" value="1"/>
</dbReference>
<dbReference type="Pfam" id="PF03129">
    <property type="entry name" value="HGTP_anticodon"/>
    <property type="match status" value="1"/>
</dbReference>
<dbReference type="Pfam" id="PF02824">
    <property type="entry name" value="TGS"/>
    <property type="match status" value="1"/>
</dbReference>
<dbReference type="Pfam" id="PF00587">
    <property type="entry name" value="tRNA-synt_2b"/>
    <property type="match status" value="1"/>
</dbReference>
<dbReference type="Pfam" id="PF07973">
    <property type="entry name" value="tRNA_SAD"/>
    <property type="match status" value="1"/>
</dbReference>
<dbReference type="PRINTS" id="PR01047">
    <property type="entry name" value="TRNASYNTHTHR"/>
</dbReference>
<dbReference type="SMART" id="SM00863">
    <property type="entry name" value="tRNA_SAD"/>
    <property type="match status" value="1"/>
</dbReference>
<dbReference type="SUPFAM" id="SSF52954">
    <property type="entry name" value="Class II aaRS ABD-related"/>
    <property type="match status" value="1"/>
</dbReference>
<dbReference type="SUPFAM" id="SSF55681">
    <property type="entry name" value="Class II aaRS and biotin synthetases"/>
    <property type="match status" value="1"/>
</dbReference>
<dbReference type="SUPFAM" id="SSF81271">
    <property type="entry name" value="TGS-like"/>
    <property type="match status" value="1"/>
</dbReference>
<dbReference type="SUPFAM" id="SSF55186">
    <property type="entry name" value="ThrRS/AlaRS common domain"/>
    <property type="match status" value="1"/>
</dbReference>
<dbReference type="PROSITE" id="PS50862">
    <property type="entry name" value="AA_TRNA_LIGASE_II"/>
    <property type="match status" value="1"/>
</dbReference>
<dbReference type="PROSITE" id="PS51880">
    <property type="entry name" value="TGS"/>
    <property type="match status" value="1"/>
</dbReference>